<organism>
    <name type="scientific">Chlamydia trachomatis serovar A (strain ATCC VR-571B / DSM 19440 / HAR-13)</name>
    <dbReference type="NCBI Taxonomy" id="315277"/>
    <lineage>
        <taxon>Bacteria</taxon>
        <taxon>Pseudomonadati</taxon>
        <taxon>Chlamydiota</taxon>
        <taxon>Chlamydiia</taxon>
        <taxon>Chlamydiales</taxon>
        <taxon>Chlamydiaceae</taxon>
        <taxon>Chlamydia/Chlamydophila group</taxon>
        <taxon>Chlamydia</taxon>
    </lineage>
</organism>
<evidence type="ECO:0000255" key="1">
    <source>
        <dbReference type="HAMAP-Rule" id="MF_00539"/>
    </source>
</evidence>
<evidence type="ECO:0000256" key="2">
    <source>
        <dbReference type="SAM" id="MobiDB-lite"/>
    </source>
</evidence>
<evidence type="ECO:0000305" key="3"/>
<feature type="chain" id="PRO_1000017449" description="Large ribosomal subunit protein bL27">
    <location>
        <begin position="1"/>
        <end position="83"/>
    </location>
</feature>
<feature type="region of interest" description="Disordered" evidence="2">
    <location>
        <begin position="1"/>
        <end position="25"/>
    </location>
</feature>
<comment type="similarity">
    <text evidence="1">Belongs to the bacterial ribosomal protein bL27 family.</text>
</comment>
<reference key="1">
    <citation type="journal article" date="2005" name="Infect. Immun.">
        <title>Comparative genomic analysis of Chlamydia trachomatis oculotropic and genitotropic strains.</title>
        <authorList>
            <person name="Carlson J.H."/>
            <person name="Porcella S.F."/>
            <person name="McClarty G."/>
            <person name="Caldwell H.D."/>
        </authorList>
    </citation>
    <scope>NUCLEOTIDE SEQUENCE [LARGE SCALE GENOMIC DNA]</scope>
    <source>
        <strain>ATCC VR-571B / DSM 19440 / HAR-13</strain>
    </source>
</reference>
<proteinExistence type="inferred from homology"/>
<protein>
    <recommendedName>
        <fullName evidence="1">Large ribosomal subunit protein bL27</fullName>
    </recommendedName>
    <alternativeName>
        <fullName evidence="3">50S ribosomal protein L27</fullName>
    </alternativeName>
</protein>
<name>RL27_CHLTA</name>
<sequence length="83" mass="8944">MAHKKGQGASRNGRDSESKRLGLKVGAGQRVSTGSILVRQRGTKWHPAVNVGRGKDDTLFALVDGIVVMKKTDRTYVSVIPQA</sequence>
<gene>
    <name evidence="1" type="primary">rpmA</name>
    <name type="ordered locus">CTA_0455</name>
</gene>
<dbReference type="EMBL" id="CP000051">
    <property type="protein sequence ID" value="AAX50688.1"/>
    <property type="molecule type" value="Genomic_DNA"/>
</dbReference>
<dbReference type="RefSeq" id="WP_009871771.1">
    <property type="nucleotide sequence ID" value="NC_007429.1"/>
</dbReference>
<dbReference type="SMR" id="Q3KLT4"/>
<dbReference type="GeneID" id="93065248"/>
<dbReference type="KEGG" id="cta:CTA_0455"/>
<dbReference type="HOGENOM" id="CLU_095424_4_0_0"/>
<dbReference type="Proteomes" id="UP000002532">
    <property type="component" value="Chromosome"/>
</dbReference>
<dbReference type="GO" id="GO:0022625">
    <property type="term" value="C:cytosolic large ribosomal subunit"/>
    <property type="evidence" value="ECO:0007669"/>
    <property type="project" value="TreeGrafter"/>
</dbReference>
<dbReference type="GO" id="GO:0003735">
    <property type="term" value="F:structural constituent of ribosome"/>
    <property type="evidence" value="ECO:0007669"/>
    <property type="project" value="InterPro"/>
</dbReference>
<dbReference type="GO" id="GO:0006412">
    <property type="term" value="P:translation"/>
    <property type="evidence" value="ECO:0007669"/>
    <property type="project" value="UniProtKB-UniRule"/>
</dbReference>
<dbReference type="FunFam" id="2.40.50.100:FF:000020">
    <property type="entry name" value="50S ribosomal protein L27"/>
    <property type="match status" value="1"/>
</dbReference>
<dbReference type="Gene3D" id="2.40.50.100">
    <property type="match status" value="1"/>
</dbReference>
<dbReference type="HAMAP" id="MF_00539">
    <property type="entry name" value="Ribosomal_bL27"/>
    <property type="match status" value="1"/>
</dbReference>
<dbReference type="InterPro" id="IPR001684">
    <property type="entry name" value="Ribosomal_bL27"/>
</dbReference>
<dbReference type="NCBIfam" id="TIGR00062">
    <property type="entry name" value="L27"/>
    <property type="match status" value="1"/>
</dbReference>
<dbReference type="PANTHER" id="PTHR15893:SF0">
    <property type="entry name" value="LARGE RIBOSOMAL SUBUNIT PROTEIN BL27M"/>
    <property type="match status" value="1"/>
</dbReference>
<dbReference type="PANTHER" id="PTHR15893">
    <property type="entry name" value="RIBOSOMAL PROTEIN L27"/>
    <property type="match status" value="1"/>
</dbReference>
<dbReference type="Pfam" id="PF01016">
    <property type="entry name" value="Ribosomal_L27"/>
    <property type="match status" value="1"/>
</dbReference>
<dbReference type="PRINTS" id="PR00063">
    <property type="entry name" value="RIBOSOMALL27"/>
</dbReference>
<dbReference type="SUPFAM" id="SSF110324">
    <property type="entry name" value="Ribosomal L27 protein-like"/>
    <property type="match status" value="1"/>
</dbReference>
<accession>Q3KLT4</accession>
<keyword id="KW-0687">Ribonucleoprotein</keyword>
<keyword id="KW-0689">Ribosomal protein</keyword>